<keyword id="KW-0240">DNA-directed RNA polymerase</keyword>
<keyword id="KW-0548">Nucleotidyltransferase</keyword>
<keyword id="KW-1185">Reference proteome</keyword>
<keyword id="KW-0804">Transcription</keyword>
<keyword id="KW-0808">Transferase</keyword>
<reference key="1">
    <citation type="journal article" date="2003" name="Proc. Natl. Acad. Sci. U.S.A.">
        <title>The genome sequence of Clostridium tetani, the causative agent of tetanus disease.</title>
        <authorList>
            <person name="Brueggemann H."/>
            <person name="Baeumer S."/>
            <person name="Fricke W.F."/>
            <person name="Wiezer A."/>
            <person name="Liesegang H."/>
            <person name="Decker I."/>
            <person name="Herzberg C."/>
            <person name="Martinez-Arias R."/>
            <person name="Merkl R."/>
            <person name="Henne A."/>
            <person name="Gottschalk G."/>
        </authorList>
    </citation>
    <scope>NUCLEOTIDE SEQUENCE [LARGE SCALE GENOMIC DNA]</scope>
    <source>
        <strain>Massachusetts / E88</strain>
    </source>
</reference>
<sequence>MLEIEKPKIECIEMTENGSYGKFVVEPLERGYGITLGNALRRILLSSLPGVAVNSIKIENVLHEFSTVKGVKEDVTEIILNIKLLALKMTGEGPKTIYIDAKGPGVVTAADIKTDSDVEIINKDLHIATLDDDGKLYIEMTVDRGRGYVSQNRNKVEGMPIGTIPIDSIYTPVKRVNFTVANTRVGQITDYDKLTLEIWTNGTIMPDDAISLSAKILIEHFKLFMTLTDHADDVEIMVEKEEDKKEKVLEMTIEELDLSVRSYNCLKRAGINTVQELTERTVEDMMKVRNLGRKSLEEVEQKLEALELGLKQSEE</sequence>
<gene>
    <name evidence="1" type="primary">rpoA</name>
    <name type="ordered locus">CTC_02578</name>
</gene>
<comment type="function">
    <text evidence="1">DNA-dependent RNA polymerase catalyzes the transcription of DNA into RNA using the four ribonucleoside triphosphates as substrates.</text>
</comment>
<comment type="catalytic activity">
    <reaction evidence="1">
        <text>RNA(n) + a ribonucleoside 5'-triphosphate = RNA(n+1) + diphosphate</text>
        <dbReference type="Rhea" id="RHEA:21248"/>
        <dbReference type="Rhea" id="RHEA-COMP:14527"/>
        <dbReference type="Rhea" id="RHEA-COMP:17342"/>
        <dbReference type="ChEBI" id="CHEBI:33019"/>
        <dbReference type="ChEBI" id="CHEBI:61557"/>
        <dbReference type="ChEBI" id="CHEBI:140395"/>
        <dbReference type="EC" id="2.7.7.6"/>
    </reaction>
</comment>
<comment type="subunit">
    <text evidence="1">Homodimer. The RNAP catalytic core consists of 2 alpha, 1 beta, 1 beta' and 1 omega subunit. When a sigma factor is associated with the core the holoenzyme is formed, which can initiate transcription.</text>
</comment>
<comment type="domain">
    <text evidence="1">The N-terminal domain is essential for RNAP assembly and basal transcription, whereas the C-terminal domain is involved in interaction with transcriptional regulators and with upstream promoter elements.</text>
</comment>
<comment type="similarity">
    <text evidence="1">Belongs to the RNA polymerase alpha chain family.</text>
</comment>
<feature type="chain" id="PRO_0000175296" description="DNA-directed RNA polymerase subunit alpha">
    <location>
        <begin position="1"/>
        <end position="315"/>
    </location>
</feature>
<feature type="region of interest" description="Alpha N-terminal domain (alpha-NTD)" evidence="1">
    <location>
        <begin position="1"/>
        <end position="228"/>
    </location>
</feature>
<feature type="region of interest" description="Alpha C-terminal domain (alpha-CTD)" evidence="1">
    <location>
        <begin position="245"/>
        <end position="315"/>
    </location>
</feature>
<dbReference type="EC" id="2.7.7.6" evidence="1"/>
<dbReference type="EMBL" id="AE015927">
    <property type="protein sequence ID" value="AAO37035.1"/>
    <property type="molecule type" value="Genomic_DNA"/>
</dbReference>
<dbReference type="RefSeq" id="WP_011100696.1">
    <property type="nucleotide sequence ID" value="NC_004557.1"/>
</dbReference>
<dbReference type="SMR" id="Q890R0"/>
<dbReference type="STRING" id="212717.CTC_02578"/>
<dbReference type="GeneID" id="24254511"/>
<dbReference type="KEGG" id="ctc:CTC_02578"/>
<dbReference type="HOGENOM" id="CLU_053084_0_1_9"/>
<dbReference type="OrthoDB" id="9805706at2"/>
<dbReference type="Proteomes" id="UP000001412">
    <property type="component" value="Chromosome"/>
</dbReference>
<dbReference type="GO" id="GO:0005737">
    <property type="term" value="C:cytoplasm"/>
    <property type="evidence" value="ECO:0007669"/>
    <property type="project" value="UniProtKB-ARBA"/>
</dbReference>
<dbReference type="GO" id="GO:0000428">
    <property type="term" value="C:DNA-directed RNA polymerase complex"/>
    <property type="evidence" value="ECO:0007669"/>
    <property type="project" value="UniProtKB-KW"/>
</dbReference>
<dbReference type="GO" id="GO:0003677">
    <property type="term" value="F:DNA binding"/>
    <property type="evidence" value="ECO:0007669"/>
    <property type="project" value="UniProtKB-UniRule"/>
</dbReference>
<dbReference type="GO" id="GO:0003899">
    <property type="term" value="F:DNA-directed RNA polymerase activity"/>
    <property type="evidence" value="ECO:0007669"/>
    <property type="project" value="UniProtKB-UniRule"/>
</dbReference>
<dbReference type="GO" id="GO:0046983">
    <property type="term" value="F:protein dimerization activity"/>
    <property type="evidence" value="ECO:0007669"/>
    <property type="project" value="InterPro"/>
</dbReference>
<dbReference type="GO" id="GO:0006351">
    <property type="term" value="P:DNA-templated transcription"/>
    <property type="evidence" value="ECO:0007669"/>
    <property type="project" value="UniProtKB-UniRule"/>
</dbReference>
<dbReference type="CDD" id="cd06928">
    <property type="entry name" value="RNAP_alpha_NTD"/>
    <property type="match status" value="1"/>
</dbReference>
<dbReference type="FunFam" id="1.10.150.20:FF:000001">
    <property type="entry name" value="DNA-directed RNA polymerase subunit alpha"/>
    <property type="match status" value="1"/>
</dbReference>
<dbReference type="FunFam" id="2.170.120.12:FF:000001">
    <property type="entry name" value="DNA-directed RNA polymerase subunit alpha"/>
    <property type="match status" value="1"/>
</dbReference>
<dbReference type="Gene3D" id="1.10.150.20">
    <property type="entry name" value="5' to 3' exonuclease, C-terminal subdomain"/>
    <property type="match status" value="1"/>
</dbReference>
<dbReference type="Gene3D" id="2.170.120.12">
    <property type="entry name" value="DNA-directed RNA polymerase, insert domain"/>
    <property type="match status" value="1"/>
</dbReference>
<dbReference type="Gene3D" id="3.30.1360.10">
    <property type="entry name" value="RNA polymerase, RBP11-like subunit"/>
    <property type="match status" value="1"/>
</dbReference>
<dbReference type="HAMAP" id="MF_00059">
    <property type="entry name" value="RNApol_bact_RpoA"/>
    <property type="match status" value="1"/>
</dbReference>
<dbReference type="InterPro" id="IPR011262">
    <property type="entry name" value="DNA-dir_RNA_pol_insert"/>
</dbReference>
<dbReference type="InterPro" id="IPR011263">
    <property type="entry name" value="DNA-dir_RNA_pol_RpoA/D/Rpb3"/>
</dbReference>
<dbReference type="InterPro" id="IPR011773">
    <property type="entry name" value="DNA-dir_RpoA"/>
</dbReference>
<dbReference type="InterPro" id="IPR036603">
    <property type="entry name" value="RBP11-like"/>
</dbReference>
<dbReference type="InterPro" id="IPR011260">
    <property type="entry name" value="RNAP_asu_C"/>
</dbReference>
<dbReference type="InterPro" id="IPR036643">
    <property type="entry name" value="RNApol_insert_sf"/>
</dbReference>
<dbReference type="NCBIfam" id="NF003513">
    <property type="entry name" value="PRK05182.1-2"/>
    <property type="match status" value="1"/>
</dbReference>
<dbReference type="NCBIfam" id="NF003515">
    <property type="entry name" value="PRK05182.2-1"/>
    <property type="match status" value="1"/>
</dbReference>
<dbReference type="NCBIfam" id="NF003516">
    <property type="entry name" value="PRK05182.2-2"/>
    <property type="match status" value="1"/>
</dbReference>
<dbReference type="NCBIfam" id="NF003519">
    <property type="entry name" value="PRK05182.2-5"/>
    <property type="match status" value="1"/>
</dbReference>
<dbReference type="NCBIfam" id="TIGR02027">
    <property type="entry name" value="rpoA"/>
    <property type="match status" value="1"/>
</dbReference>
<dbReference type="Pfam" id="PF01000">
    <property type="entry name" value="RNA_pol_A_bac"/>
    <property type="match status" value="1"/>
</dbReference>
<dbReference type="Pfam" id="PF03118">
    <property type="entry name" value="RNA_pol_A_CTD"/>
    <property type="match status" value="1"/>
</dbReference>
<dbReference type="Pfam" id="PF01193">
    <property type="entry name" value="RNA_pol_L"/>
    <property type="match status" value="1"/>
</dbReference>
<dbReference type="SMART" id="SM00662">
    <property type="entry name" value="RPOLD"/>
    <property type="match status" value="1"/>
</dbReference>
<dbReference type="SUPFAM" id="SSF47789">
    <property type="entry name" value="C-terminal domain of RNA polymerase alpha subunit"/>
    <property type="match status" value="1"/>
</dbReference>
<dbReference type="SUPFAM" id="SSF56553">
    <property type="entry name" value="Insert subdomain of RNA polymerase alpha subunit"/>
    <property type="match status" value="1"/>
</dbReference>
<dbReference type="SUPFAM" id="SSF55257">
    <property type="entry name" value="RBP11-like subunits of RNA polymerase"/>
    <property type="match status" value="1"/>
</dbReference>
<accession>Q890R0</accession>
<proteinExistence type="inferred from homology"/>
<name>RPOA_CLOTE</name>
<organism>
    <name type="scientific">Clostridium tetani (strain Massachusetts / E88)</name>
    <dbReference type="NCBI Taxonomy" id="212717"/>
    <lineage>
        <taxon>Bacteria</taxon>
        <taxon>Bacillati</taxon>
        <taxon>Bacillota</taxon>
        <taxon>Clostridia</taxon>
        <taxon>Eubacteriales</taxon>
        <taxon>Clostridiaceae</taxon>
        <taxon>Clostridium</taxon>
    </lineage>
</organism>
<protein>
    <recommendedName>
        <fullName evidence="1">DNA-directed RNA polymerase subunit alpha</fullName>
        <shortName evidence="1">RNAP subunit alpha</shortName>
        <ecNumber evidence="1">2.7.7.6</ecNumber>
    </recommendedName>
    <alternativeName>
        <fullName evidence="1">RNA polymerase subunit alpha</fullName>
    </alternativeName>
    <alternativeName>
        <fullName evidence="1">Transcriptase subunit alpha</fullName>
    </alternativeName>
</protein>
<evidence type="ECO:0000255" key="1">
    <source>
        <dbReference type="HAMAP-Rule" id="MF_00059"/>
    </source>
</evidence>